<reference key="1">
    <citation type="journal article" date="2009" name="PLoS ONE">
        <title>Genome degradation in Brucella ovis corresponds with narrowing of its host range and tissue tropism.</title>
        <authorList>
            <person name="Tsolis R.M."/>
            <person name="Seshadri R."/>
            <person name="Santos R.L."/>
            <person name="Sangari F.J."/>
            <person name="Lobo J.M."/>
            <person name="de Jong M.F."/>
            <person name="Ren Q."/>
            <person name="Myers G."/>
            <person name="Brinkac L.M."/>
            <person name="Nelson W.C."/>
            <person name="Deboy R.T."/>
            <person name="Angiuoli S."/>
            <person name="Khouri H."/>
            <person name="Dimitrov G."/>
            <person name="Robinson J.R."/>
            <person name="Mulligan S."/>
            <person name="Walker R.L."/>
            <person name="Elzer P.E."/>
            <person name="Hassan K.A."/>
            <person name="Paulsen I.T."/>
        </authorList>
    </citation>
    <scope>NUCLEOTIDE SEQUENCE [LARGE SCALE GENOMIC DNA]</scope>
    <source>
        <strain>ATCC 25840 / 63/290 / NCTC 10512</strain>
    </source>
</reference>
<name>RL24_BRUO2</name>
<evidence type="ECO:0000255" key="1">
    <source>
        <dbReference type="HAMAP-Rule" id="MF_01326"/>
    </source>
</evidence>
<evidence type="ECO:0000305" key="2"/>
<proteinExistence type="inferred from homology"/>
<accession>A5VQZ5</accession>
<comment type="function">
    <text evidence="1">One of two assembly initiator proteins, it binds directly to the 5'-end of the 23S rRNA, where it nucleates assembly of the 50S subunit.</text>
</comment>
<comment type="function">
    <text evidence="1">One of the proteins that surrounds the polypeptide exit tunnel on the outside of the subunit.</text>
</comment>
<comment type="subunit">
    <text evidence="1">Part of the 50S ribosomal subunit.</text>
</comment>
<comment type="similarity">
    <text evidence="1">Belongs to the universal ribosomal protein uL24 family.</text>
</comment>
<feature type="chain" id="PRO_1000052188" description="Large ribosomal subunit protein uL24">
    <location>
        <begin position="1"/>
        <end position="103"/>
    </location>
</feature>
<gene>
    <name evidence="1" type="primary">rplX</name>
    <name type="ordered locus">BOV_1185</name>
</gene>
<keyword id="KW-0687">Ribonucleoprotein</keyword>
<keyword id="KW-0689">Ribosomal protein</keyword>
<keyword id="KW-0694">RNA-binding</keyword>
<keyword id="KW-0699">rRNA-binding</keyword>
<protein>
    <recommendedName>
        <fullName evidence="1">Large ribosomal subunit protein uL24</fullName>
    </recommendedName>
    <alternativeName>
        <fullName evidence="2">50S ribosomal protein L24</fullName>
    </alternativeName>
</protein>
<dbReference type="EMBL" id="CP000708">
    <property type="protein sequence ID" value="ABQ61019.1"/>
    <property type="molecule type" value="Genomic_DNA"/>
</dbReference>
<dbReference type="RefSeq" id="WP_006012781.1">
    <property type="nucleotide sequence ID" value="NC_009505.1"/>
</dbReference>
<dbReference type="SMR" id="A5VQZ5"/>
<dbReference type="GeneID" id="45124590"/>
<dbReference type="KEGG" id="bov:BOV_1185"/>
<dbReference type="HOGENOM" id="CLU_093315_2_2_5"/>
<dbReference type="PhylomeDB" id="A5VQZ5"/>
<dbReference type="Proteomes" id="UP000006383">
    <property type="component" value="Chromosome I"/>
</dbReference>
<dbReference type="GO" id="GO:1990904">
    <property type="term" value="C:ribonucleoprotein complex"/>
    <property type="evidence" value="ECO:0007669"/>
    <property type="project" value="UniProtKB-KW"/>
</dbReference>
<dbReference type="GO" id="GO:0005840">
    <property type="term" value="C:ribosome"/>
    <property type="evidence" value="ECO:0007669"/>
    <property type="project" value="UniProtKB-KW"/>
</dbReference>
<dbReference type="GO" id="GO:0019843">
    <property type="term" value="F:rRNA binding"/>
    <property type="evidence" value="ECO:0007669"/>
    <property type="project" value="UniProtKB-UniRule"/>
</dbReference>
<dbReference type="GO" id="GO:0003735">
    <property type="term" value="F:structural constituent of ribosome"/>
    <property type="evidence" value="ECO:0007669"/>
    <property type="project" value="InterPro"/>
</dbReference>
<dbReference type="GO" id="GO:0006412">
    <property type="term" value="P:translation"/>
    <property type="evidence" value="ECO:0007669"/>
    <property type="project" value="UniProtKB-UniRule"/>
</dbReference>
<dbReference type="CDD" id="cd06089">
    <property type="entry name" value="KOW_RPL26"/>
    <property type="match status" value="1"/>
</dbReference>
<dbReference type="FunFam" id="2.30.30.30:FF:000004">
    <property type="entry name" value="50S ribosomal protein L24"/>
    <property type="match status" value="1"/>
</dbReference>
<dbReference type="Gene3D" id="2.30.30.30">
    <property type="match status" value="1"/>
</dbReference>
<dbReference type="HAMAP" id="MF_01326_B">
    <property type="entry name" value="Ribosomal_uL24_B"/>
    <property type="match status" value="1"/>
</dbReference>
<dbReference type="InterPro" id="IPR005824">
    <property type="entry name" value="KOW"/>
</dbReference>
<dbReference type="InterPro" id="IPR014722">
    <property type="entry name" value="Rib_uL2_dom2"/>
</dbReference>
<dbReference type="InterPro" id="IPR003256">
    <property type="entry name" value="Ribosomal_uL24"/>
</dbReference>
<dbReference type="InterPro" id="IPR005825">
    <property type="entry name" value="Ribosomal_uL24_CS"/>
</dbReference>
<dbReference type="InterPro" id="IPR041988">
    <property type="entry name" value="Ribosomal_uL24_KOW"/>
</dbReference>
<dbReference type="InterPro" id="IPR008991">
    <property type="entry name" value="Translation_prot_SH3-like_sf"/>
</dbReference>
<dbReference type="NCBIfam" id="TIGR01079">
    <property type="entry name" value="rplX_bact"/>
    <property type="match status" value="1"/>
</dbReference>
<dbReference type="PANTHER" id="PTHR12903">
    <property type="entry name" value="MITOCHONDRIAL RIBOSOMAL PROTEIN L24"/>
    <property type="match status" value="1"/>
</dbReference>
<dbReference type="Pfam" id="PF00467">
    <property type="entry name" value="KOW"/>
    <property type="match status" value="1"/>
</dbReference>
<dbReference type="Pfam" id="PF17136">
    <property type="entry name" value="ribosomal_L24"/>
    <property type="match status" value="1"/>
</dbReference>
<dbReference type="SMART" id="SM00739">
    <property type="entry name" value="KOW"/>
    <property type="match status" value="1"/>
</dbReference>
<dbReference type="SUPFAM" id="SSF50104">
    <property type="entry name" value="Translation proteins SH3-like domain"/>
    <property type="match status" value="1"/>
</dbReference>
<dbReference type="PROSITE" id="PS01108">
    <property type="entry name" value="RIBOSOMAL_L24"/>
    <property type="match status" value="1"/>
</dbReference>
<sequence>MQKIRKGDSVVVLSGKDKGRKGEVLKVMPKDEQALVSGINIVKRHQRQTQTQEAGIISKEAPIHLSNLAIADPKDGKPTRIGFRVEDGKKVRVAKRSGALIDG</sequence>
<organism>
    <name type="scientific">Brucella ovis (strain ATCC 25840 / 63/290 / NCTC 10512)</name>
    <dbReference type="NCBI Taxonomy" id="444178"/>
    <lineage>
        <taxon>Bacteria</taxon>
        <taxon>Pseudomonadati</taxon>
        <taxon>Pseudomonadota</taxon>
        <taxon>Alphaproteobacteria</taxon>
        <taxon>Hyphomicrobiales</taxon>
        <taxon>Brucellaceae</taxon>
        <taxon>Brucella/Ochrobactrum group</taxon>
        <taxon>Brucella</taxon>
    </lineage>
</organism>